<sequence>MAERTHACGKVTVEAVGQTVQLKGWVQKRRDLGGLIFIDLRDRTGIVQVVFNPETSKEALEVAETIRSEYVLHVEGTVVERGEGAINDNMATGRIEVQATKVNVLNAAKTTPIIIADDTDASEDVRLKYRYLDLRRPVMFNTFKMRHDVTKTIRNFLDTEEFLEVETPILTKSTPEGARDYLVPSRVHDGEFYALPQSPQLFKQLLMVGGFERYYQVARCFRDEDLRADRQPEFTQIDIEASFLTQDEILDMMERMMTKVMKDAKGVEVSAPFPRMKYADAMARYGSDKPDTRFEMELTDLSEFAAGCGFKVFTSAVESGGQVKAINAKGAASKYSRKDIDALTEFVKVYGAKGLAWLKVEEDGLKGPIAKFFGEEDANVLMTTLEATAGDLLLFVADKKSVVADSLGALRLRLGKELELIDESKFNFLWVTDWPLLEYDEDADRYFAAHHPFTMPFREDVELLETAPEKARAQAYDLVLNGYELGGGSLRIYERDVQEKMFKALGFSQEEAQEQFGFLLEAFEYGTPPHGGIALGLDRLVMLLAGRTNLRDTIAFPKTASASCLLTEAPSPVAEAQLEELNLKLSLKEEK</sequence>
<proteinExistence type="inferred from homology"/>
<dbReference type="EC" id="6.1.1.23" evidence="1"/>
<dbReference type="EMBL" id="CP001186">
    <property type="protein sequence ID" value="ACK97064.1"/>
    <property type="molecule type" value="Genomic_DNA"/>
</dbReference>
<dbReference type="RefSeq" id="WP_000840901.1">
    <property type="nucleotide sequence ID" value="NC_011772.1"/>
</dbReference>
<dbReference type="SMR" id="B7IIR4"/>
<dbReference type="GeneID" id="93006698"/>
<dbReference type="KEGG" id="bcg:BCG9842_B0714"/>
<dbReference type="HOGENOM" id="CLU_014330_3_2_9"/>
<dbReference type="Proteomes" id="UP000006744">
    <property type="component" value="Chromosome"/>
</dbReference>
<dbReference type="GO" id="GO:0005737">
    <property type="term" value="C:cytoplasm"/>
    <property type="evidence" value="ECO:0007669"/>
    <property type="project" value="UniProtKB-SubCell"/>
</dbReference>
<dbReference type="GO" id="GO:0004815">
    <property type="term" value="F:aspartate-tRNA ligase activity"/>
    <property type="evidence" value="ECO:0007669"/>
    <property type="project" value="UniProtKB-UniRule"/>
</dbReference>
<dbReference type="GO" id="GO:0050560">
    <property type="term" value="F:aspartate-tRNA(Asn) ligase activity"/>
    <property type="evidence" value="ECO:0007669"/>
    <property type="project" value="UniProtKB-EC"/>
</dbReference>
<dbReference type="GO" id="GO:0005524">
    <property type="term" value="F:ATP binding"/>
    <property type="evidence" value="ECO:0007669"/>
    <property type="project" value="UniProtKB-UniRule"/>
</dbReference>
<dbReference type="GO" id="GO:0140096">
    <property type="term" value="F:catalytic activity, acting on a protein"/>
    <property type="evidence" value="ECO:0007669"/>
    <property type="project" value="UniProtKB-ARBA"/>
</dbReference>
<dbReference type="GO" id="GO:0003676">
    <property type="term" value="F:nucleic acid binding"/>
    <property type="evidence" value="ECO:0007669"/>
    <property type="project" value="InterPro"/>
</dbReference>
<dbReference type="GO" id="GO:0016740">
    <property type="term" value="F:transferase activity"/>
    <property type="evidence" value="ECO:0007669"/>
    <property type="project" value="UniProtKB-ARBA"/>
</dbReference>
<dbReference type="GO" id="GO:0006422">
    <property type="term" value="P:aspartyl-tRNA aminoacylation"/>
    <property type="evidence" value="ECO:0007669"/>
    <property type="project" value="UniProtKB-UniRule"/>
</dbReference>
<dbReference type="CDD" id="cd00777">
    <property type="entry name" value="AspRS_core"/>
    <property type="match status" value="1"/>
</dbReference>
<dbReference type="CDD" id="cd04317">
    <property type="entry name" value="EcAspRS_like_N"/>
    <property type="match status" value="1"/>
</dbReference>
<dbReference type="Gene3D" id="3.30.930.10">
    <property type="entry name" value="Bira Bifunctional Protein, Domain 2"/>
    <property type="match status" value="1"/>
</dbReference>
<dbReference type="Gene3D" id="3.30.1360.30">
    <property type="entry name" value="GAD-like domain"/>
    <property type="match status" value="1"/>
</dbReference>
<dbReference type="Gene3D" id="2.40.50.140">
    <property type="entry name" value="Nucleic acid-binding proteins"/>
    <property type="match status" value="1"/>
</dbReference>
<dbReference type="HAMAP" id="MF_00044">
    <property type="entry name" value="Asp_tRNA_synth_type1"/>
    <property type="match status" value="1"/>
</dbReference>
<dbReference type="InterPro" id="IPR004364">
    <property type="entry name" value="Aa-tRNA-synt_II"/>
</dbReference>
<dbReference type="InterPro" id="IPR006195">
    <property type="entry name" value="aa-tRNA-synth_II"/>
</dbReference>
<dbReference type="InterPro" id="IPR045864">
    <property type="entry name" value="aa-tRNA-synth_II/BPL/LPL"/>
</dbReference>
<dbReference type="InterPro" id="IPR004524">
    <property type="entry name" value="Asp-tRNA-ligase_1"/>
</dbReference>
<dbReference type="InterPro" id="IPR047089">
    <property type="entry name" value="Asp-tRNA-ligase_1_N"/>
</dbReference>
<dbReference type="InterPro" id="IPR002312">
    <property type="entry name" value="Asp/Asn-tRNA-synth_IIb"/>
</dbReference>
<dbReference type="InterPro" id="IPR047090">
    <property type="entry name" value="AspRS_core"/>
</dbReference>
<dbReference type="InterPro" id="IPR004115">
    <property type="entry name" value="GAD-like_sf"/>
</dbReference>
<dbReference type="InterPro" id="IPR029351">
    <property type="entry name" value="GAD_dom"/>
</dbReference>
<dbReference type="InterPro" id="IPR012340">
    <property type="entry name" value="NA-bd_OB-fold"/>
</dbReference>
<dbReference type="InterPro" id="IPR004365">
    <property type="entry name" value="NA-bd_OB_tRNA"/>
</dbReference>
<dbReference type="NCBIfam" id="TIGR00459">
    <property type="entry name" value="aspS_bact"/>
    <property type="match status" value="1"/>
</dbReference>
<dbReference type="NCBIfam" id="NF001750">
    <property type="entry name" value="PRK00476.1"/>
    <property type="match status" value="1"/>
</dbReference>
<dbReference type="PANTHER" id="PTHR22594:SF5">
    <property type="entry name" value="ASPARTATE--TRNA LIGASE, MITOCHONDRIAL"/>
    <property type="match status" value="1"/>
</dbReference>
<dbReference type="PANTHER" id="PTHR22594">
    <property type="entry name" value="ASPARTYL/LYSYL-TRNA SYNTHETASE"/>
    <property type="match status" value="1"/>
</dbReference>
<dbReference type="Pfam" id="PF02938">
    <property type="entry name" value="GAD"/>
    <property type="match status" value="1"/>
</dbReference>
<dbReference type="Pfam" id="PF00152">
    <property type="entry name" value="tRNA-synt_2"/>
    <property type="match status" value="1"/>
</dbReference>
<dbReference type="Pfam" id="PF01336">
    <property type="entry name" value="tRNA_anti-codon"/>
    <property type="match status" value="1"/>
</dbReference>
<dbReference type="PRINTS" id="PR01042">
    <property type="entry name" value="TRNASYNTHASP"/>
</dbReference>
<dbReference type="SUPFAM" id="SSF55681">
    <property type="entry name" value="Class II aaRS and biotin synthetases"/>
    <property type="match status" value="1"/>
</dbReference>
<dbReference type="SUPFAM" id="SSF55261">
    <property type="entry name" value="GAD domain-like"/>
    <property type="match status" value="1"/>
</dbReference>
<dbReference type="SUPFAM" id="SSF50249">
    <property type="entry name" value="Nucleic acid-binding proteins"/>
    <property type="match status" value="1"/>
</dbReference>
<dbReference type="PROSITE" id="PS50862">
    <property type="entry name" value="AA_TRNA_LIGASE_II"/>
    <property type="match status" value="1"/>
</dbReference>
<organism>
    <name type="scientific">Bacillus cereus (strain G9842)</name>
    <dbReference type="NCBI Taxonomy" id="405531"/>
    <lineage>
        <taxon>Bacteria</taxon>
        <taxon>Bacillati</taxon>
        <taxon>Bacillota</taxon>
        <taxon>Bacilli</taxon>
        <taxon>Bacillales</taxon>
        <taxon>Bacillaceae</taxon>
        <taxon>Bacillus</taxon>
        <taxon>Bacillus cereus group</taxon>
    </lineage>
</organism>
<evidence type="ECO:0000255" key="1">
    <source>
        <dbReference type="HAMAP-Rule" id="MF_00044"/>
    </source>
</evidence>
<protein>
    <recommendedName>
        <fullName evidence="1">Aspartate--tRNA(Asp/Asn) ligase</fullName>
        <ecNumber evidence="1">6.1.1.23</ecNumber>
    </recommendedName>
    <alternativeName>
        <fullName evidence="1">Aspartyl-tRNA synthetase</fullName>
        <shortName evidence="1">AspRS</shortName>
    </alternativeName>
    <alternativeName>
        <fullName evidence="1">Non-discriminating aspartyl-tRNA synthetase</fullName>
        <shortName evidence="1">ND-AspRS</shortName>
    </alternativeName>
</protein>
<accession>B7IIR4</accession>
<gene>
    <name evidence="1" type="primary">aspS</name>
    <name type="ordered locus">BCG9842_B0714</name>
</gene>
<keyword id="KW-0030">Aminoacyl-tRNA synthetase</keyword>
<keyword id="KW-0067">ATP-binding</keyword>
<keyword id="KW-0963">Cytoplasm</keyword>
<keyword id="KW-0436">Ligase</keyword>
<keyword id="KW-0547">Nucleotide-binding</keyword>
<keyword id="KW-0648">Protein biosynthesis</keyword>
<name>SYDND_BACC2</name>
<feature type="chain" id="PRO_1000198960" description="Aspartate--tRNA(Asp/Asn) ligase">
    <location>
        <begin position="1"/>
        <end position="591"/>
    </location>
</feature>
<feature type="region of interest" description="Aspartate" evidence="1">
    <location>
        <begin position="200"/>
        <end position="203"/>
    </location>
</feature>
<feature type="binding site" evidence="1">
    <location>
        <position position="176"/>
    </location>
    <ligand>
        <name>L-aspartate</name>
        <dbReference type="ChEBI" id="CHEBI:29991"/>
    </ligand>
</feature>
<feature type="binding site" evidence="1">
    <location>
        <begin position="222"/>
        <end position="224"/>
    </location>
    <ligand>
        <name>ATP</name>
        <dbReference type="ChEBI" id="CHEBI:30616"/>
    </ligand>
</feature>
<feature type="binding site" evidence="1">
    <location>
        <position position="222"/>
    </location>
    <ligand>
        <name>L-aspartate</name>
        <dbReference type="ChEBI" id="CHEBI:29991"/>
    </ligand>
</feature>
<feature type="binding site" evidence="1">
    <location>
        <position position="231"/>
    </location>
    <ligand>
        <name>ATP</name>
        <dbReference type="ChEBI" id="CHEBI:30616"/>
    </ligand>
</feature>
<feature type="binding site" evidence="1">
    <location>
        <position position="450"/>
    </location>
    <ligand>
        <name>L-aspartate</name>
        <dbReference type="ChEBI" id="CHEBI:29991"/>
    </ligand>
</feature>
<feature type="binding site" evidence="1">
    <location>
        <position position="484"/>
    </location>
    <ligand>
        <name>ATP</name>
        <dbReference type="ChEBI" id="CHEBI:30616"/>
    </ligand>
</feature>
<feature type="binding site" evidence="1">
    <location>
        <position position="491"/>
    </location>
    <ligand>
        <name>L-aspartate</name>
        <dbReference type="ChEBI" id="CHEBI:29991"/>
    </ligand>
</feature>
<feature type="binding site" evidence="1">
    <location>
        <begin position="536"/>
        <end position="539"/>
    </location>
    <ligand>
        <name>ATP</name>
        <dbReference type="ChEBI" id="CHEBI:30616"/>
    </ligand>
</feature>
<feature type="site" description="Important for tRNA non-discrimination" evidence="1">
    <location>
        <position position="84"/>
    </location>
</feature>
<reference key="1">
    <citation type="submission" date="2008-10" db="EMBL/GenBank/DDBJ databases">
        <title>Genome sequence of Bacillus cereus G9842.</title>
        <authorList>
            <person name="Dodson R.J."/>
            <person name="Durkin A.S."/>
            <person name="Rosovitz M.J."/>
            <person name="Rasko D.A."/>
            <person name="Hoffmaster A."/>
            <person name="Ravel J."/>
            <person name="Sutton G."/>
        </authorList>
    </citation>
    <scope>NUCLEOTIDE SEQUENCE [LARGE SCALE GENOMIC DNA]</scope>
    <source>
        <strain>G9842</strain>
    </source>
</reference>
<comment type="function">
    <text evidence="1">Aspartyl-tRNA synthetase with relaxed tRNA specificity since it is able to aspartylate not only its cognate tRNA(Asp) but also tRNA(Asn). Reaction proceeds in two steps: L-aspartate is first activated by ATP to form Asp-AMP and then transferred to the acceptor end of tRNA(Asp/Asn).</text>
</comment>
<comment type="catalytic activity">
    <reaction evidence="1">
        <text>tRNA(Asx) + L-aspartate + ATP = L-aspartyl-tRNA(Asx) + AMP + diphosphate</text>
        <dbReference type="Rhea" id="RHEA:18349"/>
        <dbReference type="Rhea" id="RHEA-COMP:9710"/>
        <dbReference type="Rhea" id="RHEA-COMP:9711"/>
        <dbReference type="ChEBI" id="CHEBI:29991"/>
        <dbReference type="ChEBI" id="CHEBI:30616"/>
        <dbReference type="ChEBI" id="CHEBI:33019"/>
        <dbReference type="ChEBI" id="CHEBI:78442"/>
        <dbReference type="ChEBI" id="CHEBI:78516"/>
        <dbReference type="ChEBI" id="CHEBI:456215"/>
        <dbReference type="EC" id="6.1.1.23"/>
    </reaction>
</comment>
<comment type="subunit">
    <text evidence="1">Homodimer.</text>
</comment>
<comment type="subcellular location">
    <subcellularLocation>
        <location evidence="1">Cytoplasm</location>
    </subcellularLocation>
</comment>
<comment type="similarity">
    <text evidence="1">Belongs to the class-II aminoacyl-tRNA synthetase family. Type 1 subfamily.</text>
</comment>